<proteinExistence type="inferred from homology"/>
<organism>
    <name type="scientific">Candida albicans (strain SC5314 / ATCC MYA-2876)</name>
    <name type="common">Yeast</name>
    <dbReference type="NCBI Taxonomy" id="237561"/>
    <lineage>
        <taxon>Eukaryota</taxon>
        <taxon>Fungi</taxon>
        <taxon>Dikarya</taxon>
        <taxon>Ascomycota</taxon>
        <taxon>Saccharomycotina</taxon>
        <taxon>Pichiomycetes</taxon>
        <taxon>Debaryomycetaceae</taxon>
        <taxon>Candida/Lodderomyces clade</taxon>
        <taxon>Candida</taxon>
    </lineage>
</organism>
<reference key="1">
    <citation type="journal article" date="2004" name="Proc. Natl. Acad. Sci. U.S.A.">
        <title>The diploid genome sequence of Candida albicans.</title>
        <authorList>
            <person name="Jones T."/>
            <person name="Federspiel N.A."/>
            <person name="Chibana H."/>
            <person name="Dungan J."/>
            <person name="Kalman S."/>
            <person name="Magee B.B."/>
            <person name="Newport G."/>
            <person name="Thorstenson Y.R."/>
            <person name="Agabian N."/>
            <person name="Magee P.T."/>
            <person name="Davis R.W."/>
            <person name="Scherer S."/>
        </authorList>
    </citation>
    <scope>NUCLEOTIDE SEQUENCE [LARGE SCALE GENOMIC DNA]</scope>
    <source>
        <strain>SC5314 / ATCC MYA-2876</strain>
    </source>
</reference>
<reference key="2">
    <citation type="journal article" date="2007" name="Genome Biol.">
        <title>Assembly of the Candida albicans genome into sixteen supercontigs aligned on the eight chromosomes.</title>
        <authorList>
            <person name="van het Hoog M."/>
            <person name="Rast T.J."/>
            <person name="Martchenko M."/>
            <person name="Grindle S."/>
            <person name="Dignard D."/>
            <person name="Hogues H."/>
            <person name="Cuomo C."/>
            <person name="Berriman M."/>
            <person name="Scherer S."/>
            <person name="Magee B.B."/>
            <person name="Whiteway M."/>
            <person name="Chibana H."/>
            <person name="Nantel A."/>
            <person name="Magee P.T."/>
        </authorList>
    </citation>
    <scope>GENOME REANNOTATION</scope>
    <source>
        <strain>SC5314 / ATCC MYA-2876</strain>
    </source>
</reference>
<reference key="3">
    <citation type="journal article" date="2013" name="Genome Biol.">
        <title>Assembly of a phased diploid Candida albicans genome facilitates allele-specific measurements and provides a simple model for repeat and indel structure.</title>
        <authorList>
            <person name="Muzzey D."/>
            <person name="Schwartz K."/>
            <person name="Weissman J.S."/>
            <person name="Sherlock G."/>
        </authorList>
    </citation>
    <scope>NUCLEOTIDE SEQUENCE [LARGE SCALE GENOMIC DNA]</scope>
    <scope>GENOME REANNOTATION</scope>
    <source>
        <strain>SC5314 / ATCC MYA-2876</strain>
    </source>
</reference>
<accession>Q5ANB2</accession>
<accession>A0A1D8PK49</accession>
<dbReference type="EC" id="3.6.4.13"/>
<dbReference type="EMBL" id="CP017625">
    <property type="protein sequence ID" value="AOW28531.1"/>
    <property type="molecule type" value="Genomic_DNA"/>
</dbReference>
<dbReference type="RefSeq" id="XP_723201.1">
    <property type="nucleotide sequence ID" value="XM_718108.1"/>
</dbReference>
<dbReference type="SMR" id="Q5ANB2"/>
<dbReference type="FunCoup" id="Q5ANB2">
    <property type="interactions" value="1136"/>
</dbReference>
<dbReference type="STRING" id="237561.Q5ANB2"/>
<dbReference type="EnsemblFungi" id="C3_05160C_A-T">
    <property type="protein sequence ID" value="C3_05160C_A-T-p1"/>
    <property type="gene ID" value="C3_05160C_A"/>
</dbReference>
<dbReference type="GeneID" id="3635229"/>
<dbReference type="KEGG" id="cal:CAALFM_C305160CA"/>
<dbReference type="CGD" id="CAL0000186628">
    <property type="gene designation" value="orf19.13412"/>
</dbReference>
<dbReference type="VEuPathDB" id="FungiDB:C3_05160C_A"/>
<dbReference type="eggNOG" id="KOG0337">
    <property type="taxonomic scope" value="Eukaryota"/>
</dbReference>
<dbReference type="HOGENOM" id="CLU_003041_5_1_1"/>
<dbReference type="InParanoid" id="Q5ANB2"/>
<dbReference type="OMA" id="EDQFGMM"/>
<dbReference type="OrthoDB" id="10261375at2759"/>
<dbReference type="PRO" id="PR:Q5ANB2"/>
<dbReference type="Proteomes" id="UP000000559">
    <property type="component" value="Chromosome 3"/>
</dbReference>
<dbReference type="GO" id="GO:0005730">
    <property type="term" value="C:nucleolus"/>
    <property type="evidence" value="ECO:0000318"/>
    <property type="project" value="GO_Central"/>
</dbReference>
<dbReference type="GO" id="GO:0030687">
    <property type="term" value="C:preribosome, large subunit precursor"/>
    <property type="evidence" value="ECO:0007669"/>
    <property type="project" value="EnsemblFungi"/>
</dbReference>
<dbReference type="GO" id="GO:0005524">
    <property type="term" value="F:ATP binding"/>
    <property type="evidence" value="ECO:0007669"/>
    <property type="project" value="UniProtKB-KW"/>
</dbReference>
<dbReference type="GO" id="GO:0016887">
    <property type="term" value="F:ATP hydrolysis activity"/>
    <property type="evidence" value="ECO:0007669"/>
    <property type="project" value="RHEA"/>
</dbReference>
<dbReference type="GO" id="GO:0042802">
    <property type="term" value="F:identical protein binding"/>
    <property type="evidence" value="ECO:0007669"/>
    <property type="project" value="EnsemblFungi"/>
</dbReference>
<dbReference type="GO" id="GO:0003723">
    <property type="term" value="F:RNA binding"/>
    <property type="evidence" value="ECO:0007669"/>
    <property type="project" value="UniProtKB-KW"/>
</dbReference>
<dbReference type="GO" id="GO:0003724">
    <property type="term" value="F:RNA helicase activity"/>
    <property type="evidence" value="ECO:0007669"/>
    <property type="project" value="UniProtKB-EC"/>
</dbReference>
<dbReference type="GO" id="GO:1902626">
    <property type="term" value="P:assembly of large subunit precursor of preribosome"/>
    <property type="evidence" value="ECO:0007669"/>
    <property type="project" value="EnsemblFungi"/>
</dbReference>
<dbReference type="GO" id="GO:0000466">
    <property type="term" value="P:maturation of 5.8S rRNA from tricistronic rRNA transcript (SSU-rRNA, 5.8S rRNA, LSU-rRNA)"/>
    <property type="evidence" value="ECO:0007669"/>
    <property type="project" value="EnsemblFungi"/>
</dbReference>
<dbReference type="GO" id="GO:0000463">
    <property type="term" value="P:maturation of LSU-rRNA from tricistronic rRNA transcript (SSU-rRNA, 5.8S rRNA, LSU-rRNA)"/>
    <property type="evidence" value="ECO:0007669"/>
    <property type="project" value="EnsemblFungi"/>
</dbReference>
<dbReference type="GO" id="GO:0006364">
    <property type="term" value="P:rRNA processing"/>
    <property type="evidence" value="ECO:0000318"/>
    <property type="project" value="GO_Central"/>
</dbReference>
<dbReference type="CDD" id="cd17959">
    <property type="entry name" value="DEADc_DDX54"/>
    <property type="match status" value="1"/>
</dbReference>
<dbReference type="CDD" id="cd18787">
    <property type="entry name" value="SF2_C_DEAD"/>
    <property type="match status" value="1"/>
</dbReference>
<dbReference type="FunFam" id="3.40.50.300:FF:000865">
    <property type="entry name" value="ATP-dependent RNA helicase DDX54"/>
    <property type="match status" value="1"/>
</dbReference>
<dbReference type="Gene3D" id="3.40.50.300">
    <property type="entry name" value="P-loop containing nucleotide triphosphate hydrolases"/>
    <property type="match status" value="2"/>
</dbReference>
<dbReference type="InterPro" id="IPR012541">
    <property type="entry name" value="DBP10_C"/>
</dbReference>
<dbReference type="InterPro" id="IPR033517">
    <property type="entry name" value="DDX54/DBP10_DEAD-box_helicase"/>
</dbReference>
<dbReference type="InterPro" id="IPR011545">
    <property type="entry name" value="DEAD/DEAH_box_helicase_dom"/>
</dbReference>
<dbReference type="InterPro" id="IPR050079">
    <property type="entry name" value="DEAD_box_RNA_helicase"/>
</dbReference>
<dbReference type="InterPro" id="IPR014001">
    <property type="entry name" value="Helicase_ATP-bd"/>
</dbReference>
<dbReference type="InterPro" id="IPR001650">
    <property type="entry name" value="Helicase_C-like"/>
</dbReference>
<dbReference type="InterPro" id="IPR027417">
    <property type="entry name" value="P-loop_NTPase"/>
</dbReference>
<dbReference type="InterPro" id="IPR000629">
    <property type="entry name" value="RNA-helicase_DEAD-box_CS"/>
</dbReference>
<dbReference type="InterPro" id="IPR014014">
    <property type="entry name" value="RNA_helicase_DEAD_Q_motif"/>
</dbReference>
<dbReference type="PANTHER" id="PTHR47959">
    <property type="entry name" value="ATP-DEPENDENT RNA HELICASE RHLE-RELATED"/>
    <property type="match status" value="1"/>
</dbReference>
<dbReference type="PANTHER" id="PTHR47959:SF8">
    <property type="entry name" value="RNA HELICASE"/>
    <property type="match status" value="1"/>
</dbReference>
<dbReference type="Pfam" id="PF08147">
    <property type="entry name" value="DBP10CT"/>
    <property type="match status" value="1"/>
</dbReference>
<dbReference type="Pfam" id="PF00270">
    <property type="entry name" value="DEAD"/>
    <property type="match status" value="1"/>
</dbReference>
<dbReference type="Pfam" id="PF00271">
    <property type="entry name" value="Helicase_C"/>
    <property type="match status" value="1"/>
</dbReference>
<dbReference type="SMART" id="SM01123">
    <property type="entry name" value="DBP10CT"/>
    <property type="match status" value="1"/>
</dbReference>
<dbReference type="SMART" id="SM00487">
    <property type="entry name" value="DEXDc"/>
    <property type="match status" value="1"/>
</dbReference>
<dbReference type="SMART" id="SM00490">
    <property type="entry name" value="HELICc"/>
    <property type="match status" value="1"/>
</dbReference>
<dbReference type="SUPFAM" id="SSF52540">
    <property type="entry name" value="P-loop containing nucleoside triphosphate hydrolases"/>
    <property type="match status" value="2"/>
</dbReference>
<dbReference type="PROSITE" id="PS00039">
    <property type="entry name" value="DEAD_ATP_HELICASE"/>
    <property type="match status" value="1"/>
</dbReference>
<dbReference type="PROSITE" id="PS51192">
    <property type="entry name" value="HELICASE_ATP_BIND_1"/>
    <property type="match status" value="1"/>
</dbReference>
<dbReference type="PROSITE" id="PS51194">
    <property type="entry name" value="HELICASE_CTER"/>
    <property type="match status" value="1"/>
</dbReference>
<dbReference type="PROSITE" id="PS51195">
    <property type="entry name" value="Q_MOTIF"/>
    <property type="match status" value="1"/>
</dbReference>
<keyword id="KW-0067">ATP-binding</keyword>
<keyword id="KW-0347">Helicase</keyword>
<keyword id="KW-0378">Hydrolase</keyword>
<keyword id="KW-0547">Nucleotide-binding</keyword>
<keyword id="KW-0539">Nucleus</keyword>
<keyword id="KW-1185">Reference proteome</keyword>
<keyword id="KW-0690">Ribosome biogenesis</keyword>
<keyword id="KW-0694">RNA-binding</keyword>
<keyword id="KW-0698">rRNA processing</keyword>
<sequence length="908" mass="103561">MSDDEAFDIAGSLALKDEDDYSDSSSNEGEDFQDEIIPSDDEKEPSPPPKKKSKPNPQAFPSLELSDNEGNNDDDDDDDSKINSYFINNNPTAKKAKAGSFASFGLTKFILANIAKKGYKQPTPIQRKTIPLIMEGRDVVGMARTGSGKTAAFVLPLIERLKSRQPGGVRAVILSPSRELALQTYKQVKEFSHGTNLQSIVLIGGDSLEEDFSKMMTKPDIIVCTPGRFLHLKVEMQYDLMTVQYIVFDEADRLFEMGFAEQLNELLASLPSNRQSLLFSATLPRSLVDFAKAGLTNPVLVRLDAESKISDQLQMAYFTTKKNEREANLLYILQEVIKMPLGSEEQIKKLKDMDKRKIDSDSEDDDDDEERKKGKKRYKFKKERLPPANRLPSPHSTIVFVPTKHHVEYVTKLLRDAGYLVSYIYGTLDQHARKNQLYQFRVGLTNVLVVTDVAARGIDIPVLANVINFTLPASSKIFIHRVGRTARAGNKGWAYSIVNEKELPYLLDLELFLGKKILLTSMHEAKVEMLKKSSTGTFIPPVVNYTERLVLGSVPRVDLETFQELYENLLRNNYEIKVLKDVAAKGEKLYHRTRQPASQESLKRSKEIIESSWDDQHLLFGENLEKQKDAFLAKLQDRNSKQTVFELKGSDESLVEFMNRRRRQLAPIQRKAKERKELLAKERLAGLTHGIEDEILRADGENGYGVDEDELQEAFEDADKKKSFRDPQFFLSHYAPASVIQDQQLSLSTSFANEAQAATFDLDNDDKIQTNKQVMRWDKKKGKYINSKSTDKKYIISENGTKIPASFRSGKFDEWRKQRNLKPTSTVEDDSNKRFKHKQQRAPKLPDKFRDDYHKQKKKVEKAIESGVNVKGFHTPQQEIKSTEQIRKARLLKEKRKAKNARPSKKRK</sequence>
<name>DBP10_CANAL</name>
<evidence type="ECO:0000250" key="1"/>
<evidence type="ECO:0000255" key="2">
    <source>
        <dbReference type="PROSITE-ProRule" id="PRU00541"/>
    </source>
</evidence>
<evidence type="ECO:0000255" key="3">
    <source>
        <dbReference type="PROSITE-ProRule" id="PRU00542"/>
    </source>
</evidence>
<evidence type="ECO:0000256" key="4">
    <source>
        <dbReference type="SAM" id="MobiDB-lite"/>
    </source>
</evidence>
<evidence type="ECO:0000305" key="5"/>
<gene>
    <name type="primary">DBP10</name>
    <name type="ordered locus">CAALFM_C305160CA</name>
    <name type="ORF">CaO19.13412</name>
    <name type="ORF">CaO19.5991</name>
</gene>
<comment type="function">
    <text evidence="1">ATP-binding RNA helicase involved in the biogenesis of 60S ribosomal subunits and is required for the normal formation of 25S and 5.8S rRNAs.</text>
</comment>
<comment type="catalytic activity">
    <reaction>
        <text>ATP + H2O = ADP + phosphate + H(+)</text>
        <dbReference type="Rhea" id="RHEA:13065"/>
        <dbReference type="ChEBI" id="CHEBI:15377"/>
        <dbReference type="ChEBI" id="CHEBI:15378"/>
        <dbReference type="ChEBI" id="CHEBI:30616"/>
        <dbReference type="ChEBI" id="CHEBI:43474"/>
        <dbReference type="ChEBI" id="CHEBI:456216"/>
        <dbReference type="EC" id="3.6.4.13"/>
    </reaction>
</comment>
<comment type="subcellular location">
    <subcellularLocation>
        <location evidence="1">Nucleus</location>
        <location evidence="1">Nucleolus</location>
    </subcellularLocation>
</comment>
<comment type="domain">
    <text>The Q motif is unique to and characteristic of the DEAD box family of RNA helicases and controls ATP binding and hydrolysis.</text>
</comment>
<comment type="similarity">
    <text evidence="5">Belongs to the DEAD box helicase family. DDX54/DBP10 subfamily.</text>
</comment>
<feature type="chain" id="PRO_0000232311" description="ATP-dependent RNA helicase DBP10">
    <location>
        <begin position="1"/>
        <end position="908"/>
    </location>
</feature>
<feature type="domain" description="Helicase ATP-binding" evidence="2">
    <location>
        <begin position="130"/>
        <end position="301"/>
    </location>
</feature>
<feature type="domain" description="Helicase C-terminal" evidence="3">
    <location>
        <begin position="373"/>
        <end position="533"/>
    </location>
</feature>
<feature type="region of interest" description="Disordered" evidence="4">
    <location>
        <begin position="1"/>
        <end position="84"/>
    </location>
</feature>
<feature type="region of interest" description="Disordered" evidence="4">
    <location>
        <begin position="352"/>
        <end position="389"/>
    </location>
</feature>
<feature type="region of interest" description="Disordered" evidence="4">
    <location>
        <begin position="821"/>
        <end position="885"/>
    </location>
</feature>
<feature type="short sequence motif" description="Q motif">
    <location>
        <begin position="99"/>
        <end position="127"/>
    </location>
</feature>
<feature type="short sequence motif" description="DEAD box">
    <location>
        <begin position="249"/>
        <end position="252"/>
    </location>
</feature>
<feature type="compositionally biased region" description="Acidic residues" evidence="4">
    <location>
        <begin position="17"/>
        <end position="43"/>
    </location>
</feature>
<feature type="compositionally biased region" description="Acidic residues" evidence="4">
    <location>
        <begin position="66"/>
        <end position="79"/>
    </location>
</feature>
<feature type="compositionally biased region" description="Basic residues" evidence="4">
    <location>
        <begin position="373"/>
        <end position="382"/>
    </location>
</feature>
<feature type="compositionally biased region" description="Basic and acidic residues" evidence="4">
    <location>
        <begin position="844"/>
        <end position="854"/>
    </location>
</feature>
<feature type="binding site" evidence="2">
    <location>
        <begin position="143"/>
        <end position="150"/>
    </location>
    <ligand>
        <name>ATP</name>
        <dbReference type="ChEBI" id="CHEBI:30616"/>
    </ligand>
</feature>
<protein>
    <recommendedName>
        <fullName>ATP-dependent RNA helicase DBP10</fullName>
        <ecNumber>3.6.4.13</ecNumber>
    </recommendedName>
</protein>